<gene>
    <name type="primary">ycf51</name>
</gene>
<accession>P48327</accession>
<comment type="subcellular location">
    <subcellularLocation>
        <location>Plastid</location>
        <location>Cyanelle</location>
    </subcellularLocation>
</comment>
<comment type="similarity">
    <text evidence="1">Belongs to the ycf51 family.</text>
</comment>
<keyword id="KW-0194">Cyanelle</keyword>
<keyword id="KW-0934">Plastid</keyword>
<organism>
    <name type="scientific">Cyanophora paradoxa</name>
    <dbReference type="NCBI Taxonomy" id="2762"/>
    <lineage>
        <taxon>Eukaryota</taxon>
        <taxon>Glaucocystophyceae</taxon>
        <taxon>Cyanophoraceae</taxon>
        <taxon>Cyanophora</taxon>
    </lineage>
</organism>
<evidence type="ECO:0000305" key="1"/>
<dbReference type="EMBL" id="U30821">
    <property type="protein sequence ID" value="AAA81246.1"/>
    <property type="molecule type" value="Genomic_DNA"/>
</dbReference>
<dbReference type="PIR" id="T06903">
    <property type="entry name" value="T06903"/>
</dbReference>
<dbReference type="GO" id="GO:0009842">
    <property type="term" value="C:cyanelle"/>
    <property type="evidence" value="ECO:0007669"/>
    <property type="project" value="UniProtKB-SubCell"/>
</dbReference>
<dbReference type="InterPro" id="IPR019664">
    <property type="entry name" value="Uncharacterised_Ycf51"/>
</dbReference>
<dbReference type="Pfam" id="PF10726">
    <property type="entry name" value="DUF2518"/>
    <property type="match status" value="1"/>
</dbReference>
<protein>
    <recommendedName>
        <fullName>Uncharacterized protein ycf51</fullName>
    </recommendedName>
    <alternativeName>
        <fullName>ORF163</fullName>
    </alternativeName>
</protein>
<feature type="chain" id="PRO_0000217380" description="Uncharacterized protein ycf51">
    <location>
        <begin position="1"/>
        <end position="163"/>
    </location>
</feature>
<geneLocation type="cyanelle"/>
<proteinExistence type="inferred from homology"/>
<reference key="1">
    <citation type="journal article" date="1995" name="Plant Mol. Biol. Rep.">
        <title>Nucleotide sequence of the cyanelle DNA from Cyanophora paradoxa.</title>
        <authorList>
            <person name="Stirewalt V.L."/>
            <person name="Michalowski C.B."/>
            <person name="Loeffelhardt W."/>
            <person name="Bohnert H.J."/>
            <person name="Bryant D.A."/>
        </authorList>
    </citation>
    <scope>NUCLEOTIDE SEQUENCE [LARGE SCALE GENOMIC DNA]</scope>
    <source>
        <strain>UTEX LB 555 / Pringsheim</strain>
    </source>
</reference>
<reference key="2">
    <citation type="book" date="1997" name="Eukaryotism and symbiosis">
        <title>The complete sequence of the cyanelle genome of Cyanophora paradoxa: the genetic complexity of a primitive plastid.</title>
        <editorList>
            <person name="Schenk H.E.A."/>
            <person name="Herrmann R."/>
            <person name="Jeon K.W."/>
            <person name="Mueller N.E."/>
            <person name="Schwemmler W."/>
        </editorList>
        <authorList>
            <person name="Loeffelhardt W."/>
            <person name="Stirewalt V.L."/>
            <person name="Michalowski C.B."/>
            <person name="Annarella M."/>
            <person name="Farley J.Y."/>
            <person name="Schluchter W.M."/>
            <person name="Chung S."/>
            <person name="Newmann-Spallart C."/>
            <person name="Steiner J.M."/>
            <person name="Jakowitsch J."/>
            <person name="Bohnert H.J."/>
            <person name="Bryant D.A."/>
        </authorList>
    </citation>
    <scope>NUCLEOTIDE SEQUENCE [LARGE SCALE GENOMIC DNA]</scope>
    <source>
        <strain>UTEX LB 555 / Pringsheim</strain>
    </source>
</reference>
<name>YCF51_CYAPA</name>
<sequence>MIEFSLLTKITLSFTILFLILSIISIIKGWKNRFQFIGVTSFSALLTISFFVFTFVPFTHKLIPGAEKYKVVFDDGANQIVIAVSSKLNQDQLVATLEQAASDLFSPGRLSRNNNSFIIKARALSDSIGTTNNSLYLGELDKILDSNTNDFETKIKIFNDSTL</sequence>